<organism>
    <name type="scientific">Renibacterium salmoninarum (strain ATCC 33209 / DSM 20767 / JCM 11484 / NBRC 15589 / NCIMB 2235)</name>
    <dbReference type="NCBI Taxonomy" id="288705"/>
    <lineage>
        <taxon>Bacteria</taxon>
        <taxon>Bacillati</taxon>
        <taxon>Actinomycetota</taxon>
        <taxon>Actinomycetes</taxon>
        <taxon>Micrococcales</taxon>
        <taxon>Micrococcaceae</taxon>
        <taxon>Renibacterium</taxon>
    </lineage>
</organism>
<reference key="1">
    <citation type="journal article" date="2008" name="J. Bacteriol.">
        <title>Genome sequence of the fish pathogen Renibacterium salmoninarum suggests reductive evolution away from an environmental Arthrobacter ancestor.</title>
        <authorList>
            <person name="Wiens G.D."/>
            <person name="Rockey D.D."/>
            <person name="Wu Z."/>
            <person name="Chang J."/>
            <person name="Levy R."/>
            <person name="Crane S."/>
            <person name="Chen D.S."/>
            <person name="Capri G.R."/>
            <person name="Burnett J.R."/>
            <person name="Sudheesh P.S."/>
            <person name="Schipma M.J."/>
            <person name="Burd H."/>
            <person name="Bhattacharyya A."/>
            <person name="Rhodes L.D."/>
            <person name="Kaul R."/>
            <person name="Strom M.S."/>
        </authorList>
    </citation>
    <scope>NUCLEOTIDE SEQUENCE [LARGE SCALE GENOMIC DNA]</scope>
    <source>
        <strain>ATCC 33209 / DSM 20767 / JCM 11484 / NBRC 15589 / NCIMB 2235</strain>
    </source>
</reference>
<dbReference type="EMBL" id="CP000910">
    <property type="protein sequence ID" value="ABY22277.1"/>
    <property type="molecule type" value="Genomic_DNA"/>
</dbReference>
<dbReference type="RefSeq" id="WP_012243981.1">
    <property type="nucleotide sequence ID" value="NC_010168.1"/>
</dbReference>
<dbReference type="SMR" id="A9WL08"/>
<dbReference type="STRING" id="288705.RSal33209_0528"/>
<dbReference type="KEGG" id="rsa:RSal33209_0528"/>
<dbReference type="eggNOG" id="COG0264">
    <property type="taxonomic scope" value="Bacteria"/>
</dbReference>
<dbReference type="HOGENOM" id="CLU_047155_0_0_11"/>
<dbReference type="Proteomes" id="UP000002007">
    <property type="component" value="Chromosome"/>
</dbReference>
<dbReference type="GO" id="GO:0005737">
    <property type="term" value="C:cytoplasm"/>
    <property type="evidence" value="ECO:0007669"/>
    <property type="project" value="UniProtKB-SubCell"/>
</dbReference>
<dbReference type="GO" id="GO:0003746">
    <property type="term" value="F:translation elongation factor activity"/>
    <property type="evidence" value="ECO:0007669"/>
    <property type="project" value="UniProtKB-UniRule"/>
</dbReference>
<dbReference type="CDD" id="cd14275">
    <property type="entry name" value="UBA_EF-Ts"/>
    <property type="match status" value="1"/>
</dbReference>
<dbReference type="FunFam" id="1.10.286.20:FF:000001">
    <property type="entry name" value="Elongation factor Ts"/>
    <property type="match status" value="1"/>
</dbReference>
<dbReference type="FunFam" id="1.10.8.10:FF:000001">
    <property type="entry name" value="Elongation factor Ts"/>
    <property type="match status" value="1"/>
</dbReference>
<dbReference type="Gene3D" id="1.10.286.20">
    <property type="match status" value="1"/>
</dbReference>
<dbReference type="Gene3D" id="1.10.8.10">
    <property type="entry name" value="DNA helicase RuvA subunit, C-terminal domain"/>
    <property type="match status" value="1"/>
</dbReference>
<dbReference type="Gene3D" id="3.30.479.20">
    <property type="entry name" value="Elongation factor Ts, dimerisation domain"/>
    <property type="match status" value="2"/>
</dbReference>
<dbReference type="HAMAP" id="MF_00050">
    <property type="entry name" value="EF_Ts"/>
    <property type="match status" value="1"/>
</dbReference>
<dbReference type="InterPro" id="IPR036402">
    <property type="entry name" value="EF-Ts_dimer_sf"/>
</dbReference>
<dbReference type="InterPro" id="IPR001816">
    <property type="entry name" value="Transl_elong_EFTs/EF1B"/>
</dbReference>
<dbReference type="InterPro" id="IPR014039">
    <property type="entry name" value="Transl_elong_EFTs/EF1B_dimer"/>
</dbReference>
<dbReference type="InterPro" id="IPR018101">
    <property type="entry name" value="Transl_elong_Ts_CS"/>
</dbReference>
<dbReference type="InterPro" id="IPR009060">
    <property type="entry name" value="UBA-like_sf"/>
</dbReference>
<dbReference type="NCBIfam" id="TIGR00116">
    <property type="entry name" value="tsf"/>
    <property type="match status" value="1"/>
</dbReference>
<dbReference type="PANTHER" id="PTHR11741">
    <property type="entry name" value="ELONGATION FACTOR TS"/>
    <property type="match status" value="1"/>
</dbReference>
<dbReference type="PANTHER" id="PTHR11741:SF0">
    <property type="entry name" value="ELONGATION FACTOR TS, MITOCHONDRIAL"/>
    <property type="match status" value="1"/>
</dbReference>
<dbReference type="Pfam" id="PF00889">
    <property type="entry name" value="EF_TS"/>
    <property type="match status" value="1"/>
</dbReference>
<dbReference type="SUPFAM" id="SSF54713">
    <property type="entry name" value="Elongation factor Ts (EF-Ts), dimerisation domain"/>
    <property type="match status" value="1"/>
</dbReference>
<dbReference type="SUPFAM" id="SSF46934">
    <property type="entry name" value="UBA-like"/>
    <property type="match status" value="1"/>
</dbReference>
<dbReference type="PROSITE" id="PS01126">
    <property type="entry name" value="EF_TS_1"/>
    <property type="match status" value="1"/>
</dbReference>
<dbReference type="PROSITE" id="PS01127">
    <property type="entry name" value="EF_TS_2"/>
    <property type="match status" value="1"/>
</dbReference>
<name>EFTS_RENSM</name>
<feature type="chain" id="PRO_1000074875" description="Elongation factor Ts">
    <location>
        <begin position="1"/>
        <end position="278"/>
    </location>
</feature>
<feature type="region of interest" description="Involved in Mg(2+) ion dislocation from EF-Tu" evidence="1">
    <location>
        <begin position="80"/>
        <end position="83"/>
    </location>
</feature>
<protein>
    <recommendedName>
        <fullName evidence="1">Elongation factor Ts</fullName>
        <shortName evidence="1">EF-Ts</shortName>
    </recommendedName>
</protein>
<sequence>MANYTAADIKALRERTGAGMMDVKKALDEADGNAEKALELIRIKGLKGATKREGRSTAEGLVAATVENGVGVMVEVNCETDFVAKSGPFIEFANKALAAAVASGAADVDALLAAEVDGKPLSELVIEAGALLGEKVAIRRLARVTGAVVDAYLHKTSKDLPAQVGVLFAVDGEGEAATTAAHDVAVHIAAYTPNYLLREDVPADLVDSERRIADETARAEGKPEAALPKIVEGRLTGFFKENVLLDQPFAKDQKQSVAQVLDAASAKAVGFARFRVGA</sequence>
<gene>
    <name evidence="1" type="primary">tsf</name>
    <name type="ordered locus">RSal33209_0528</name>
</gene>
<comment type="function">
    <text evidence="1">Associates with the EF-Tu.GDP complex and induces the exchange of GDP to GTP. It remains bound to the aminoacyl-tRNA.EF-Tu.GTP complex up to the GTP hydrolysis stage on the ribosome.</text>
</comment>
<comment type="subcellular location">
    <subcellularLocation>
        <location evidence="1">Cytoplasm</location>
    </subcellularLocation>
</comment>
<comment type="similarity">
    <text evidence="1">Belongs to the EF-Ts family.</text>
</comment>
<accession>A9WL08</accession>
<keyword id="KW-0963">Cytoplasm</keyword>
<keyword id="KW-0251">Elongation factor</keyword>
<keyword id="KW-0648">Protein biosynthesis</keyword>
<keyword id="KW-1185">Reference proteome</keyword>
<evidence type="ECO:0000255" key="1">
    <source>
        <dbReference type="HAMAP-Rule" id="MF_00050"/>
    </source>
</evidence>
<proteinExistence type="inferred from homology"/>